<organism>
    <name type="scientific">Drosophila pseudoobscura pseudoobscura</name>
    <name type="common">Fruit fly</name>
    <dbReference type="NCBI Taxonomy" id="46245"/>
    <lineage>
        <taxon>Eukaryota</taxon>
        <taxon>Metazoa</taxon>
        <taxon>Ecdysozoa</taxon>
        <taxon>Arthropoda</taxon>
        <taxon>Hexapoda</taxon>
        <taxon>Insecta</taxon>
        <taxon>Pterygota</taxon>
        <taxon>Neoptera</taxon>
        <taxon>Endopterygota</taxon>
        <taxon>Diptera</taxon>
        <taxon>Brachycera</taxon>
        <taxon>Muscomorpha</taxon>
        <taxon>Ephydroidea</taxon>
        <taxon>Drosophilidae</taxon>
        <taxon>Drosophila</taxon>
        <taxon>Sophophora</taxon>
    </lineage>
</organism>
<dbReference type="EMBL" id="CH379060">
    <property type="protein sequence ID" value="EAL33553.1"/>
    <property type="molecule type" value="Genomic_DNA"/>
</dbReference>
<dbReference type="RefSeq" id="XP_001356489.1">
    <property type="nucleotide sequence ID" value="XM_001356453.3"/>
</dbReference>
<dbReference type="SMR" id="Q29MZ0"/>
<dbReference type="FunCoup" id="Q29MZ0">
    <property type="interactions" value="2115"/>
</dbReference>
<dbReference type="STRING" id="46245.Q29MZ0"/>
<dbReference type="EnsemblMetazoa" id="FBtr0281985">
    <property type="protein sequence ID" value="FBpp0280423"/>
    <property type="gene ID" value="FBgn0076602"/>
</dbReference>
<dbReference type="KEGG" id="dpo:4817283"/>
<dbReference type="eggNOG" id="KOG2925">
    <property type="taxonomic scope" value="Eukaryota"/>
</dbReference>
<dbReference type="HOGENOM" id="CLU_106477_2_0_1"/>
<dbReference type="InParanoid" id="Q29MZ0"/>
<dbReference type="OMA" id="PNRMQAP"/>
<dbReference type="PhylomeDB" id="Q29MZ0"/>
<dbReference type="Proteomes" id="UP000001819">
    <property type="component" value="Chromosome 4"/>
</dbReference>
<dbReference type="Bgee" id="FBgn0076602">
    <property type="expression patterns" value="Expressed in male reproductive system and 2 other cell types or tissues"/>
</dbReference>
<dbReference type="GO" id="GO:0005634">
    <property type="term" value="C:nucleus"/>
    <property type="evidence" value="ECO:0007669"/>
    <property type="project" value="TreeGrafter"/>
</dbReference>
<dbReference type="GO" id="GO:0003723">
    <property type="term" value="F:RNA binding"/>
    <property type="evidence" value="ECO:0007669"/>
    <property type="project" value="UniProtKB-KW"/>
</dbReference>
<dbReference type="GO" id="GO:0003743">
    <property type="term" value="F:translation initiation factor activity"/>
    <property type="evidence" value="ECO:0007669"/>
    <property type="project" value="InterPro"/>
</dbReference>
<dbReference type="Gene3D" id="2.40.50.140">
    <property type="entry name" value="Nucleic acid-binding proteins"/>
    <property type="match status" value="1"/>
</dbReference>
<dbReference type="InterPro" id="IPR039294">
    <property type="entry name" value="EIF1AD"/>
</dbReference>
<dbReference type="InterPro" id="IPR012340">
    <property type="entry name" value="NA-bd_OB-fold"/>
</dbReference>
<dbReference type="InterPro" id="IPR006196">
    <property type="entry name" value="RNA-binding_domain_S1_IF1"/>
</dbReference>
<dbReference type="InterPro" id="IPR001253">
    <property type="entry name" value="TIF_eIF-1A"/>
</dbReference>
<dbReference type="PANTHER" id="PTHR21641:SF0">
    <property type="entry name" value="RNA-BINDING PROTEIN EIF1AD-RELATED"/>
    <property type="match status" value="1"/>
</dbReference>
<dbReference type="PANTHER" id="PTHR21641">
    <property type="entry name" value="TRANSLATION INITIATION FACTOR-RELATED"/>
    <property type="match status" value="1"/>
</dbReference>
<dbReference type="Pfam" id="PF01176">
    <property type="entry name" value="eIF-1a"/>
    <property type="match status" value="1"/>
</dbReference>
<dbReference type="SMART" id="SM00652">
    <property type="entry name" value="eIF1a"/>
    <property type="match status" value="1"/>
</dbReference>
<dbReference type="SUPFAM" id="SSF50249">
    <property type="entry name" value="Nucleic acid-binding proteins"/>
    <property type="match status" value="1"/>
</dbReference>
<keyword id="KW-1185">Reference proteome</keyword>
<keyword id="KW-0694">RNA-binding</keyword>
<name>EIF1A_DROPS</name>
<reference key="1">
    <citation type="journal article" date="2005" name="Genome Res.">
        <title>Comparative genome sequencing of Drosophila pseudoobscura: chromosomal, gene, and cis-element evolution.</title>
        <authorList>
            <person name="Richards S."/>
            <person name="Liu Y."/>
            <person name="Bettencourt B.R."/>
            <person name="Hradecky P."/>
            <person name="Letovsky S."/>
            <person name="Nielsen R."/>
            <person name="Thornton K."/>
            <person name="Hubisz M.J."/>
            <person name="Chen R."/>
            <person name="Meisel R.P."/>
            <person name="Couronne O."/>
            <person name="Hua S."/>
            <person name="Smith M.A."/>
            <person name="Zhang P."/>
            <person name="Liu J."/>
            <person name="Bussemaker H.J."/>
            <person name="van Batenburg M.F."/>
            <person name="Howells S.L."/>
            <person name="Scherer S.E."/>
            <person name="Sodergren E."/>
            <person name="Matthews B.B."/>
            <person name="Crosby M.A."/>
            <person name="Schroeder A.J."/>
            <person name="Ortiz-Barrientos D."/>
            <person name="Rives C.M."/>
            <person name="Metzker M.L."/>
            <person name="Muzny D.M."/>
            <person name="Scott G."/>
            <person name="Steffen D."/>
            <person name="Wheeler D.A."/>
            <person name="Worley K.C."/>
            <person name="Havlak P."/>
            <person name="Durbin K.J."/>
            <person name="Egan A."/>
            <person name="Gill R."/>
            <person name="Hume J."/>
            <person name="Morgan M.B."/>
            <person name="Miner G."/>
            <person name="Hamilton C."/>
            <person name="Huang Y."/>
            <person name="Waldron L."/>
            <person name="Verduzco D."/>
            <person name="Clerc-Blankenburg K.P."/>
            <person name="Dubchak I."/>
            <person name="Noor M.A.F."/>
            <person name="Anderson W."/>
            <person name="White K.P."/>
            <person name="Clark A.G."/>
            <person name="Schaeffer S.W."/>
            <person name="Gelbart W.M."/>
            <person name="Weinstock G.M."/>
            <person name="Gibbs R.A."/>
        </authorList>
    </citation>
    <scope>NUCLEOTIDE SEQUENCE [LARGE SCALE GENOMIC DNA]</scope>
    <source>
        <strain>MV2-25 / Tucson 14011-0121.94</strain>
    </source>
</reference>
<evidence type="ECO:0000256" key="1">
    <source>
        <dbReference type="SAM" id="MobiDB-lite"/>
    </source>
</evidence>
<evidence type="ECO:0000305" key="2"/>
<feature type="chain" id="PRO_0000314163" description="Probable RNA-binding protein EIF1AD">
    <location>
        <begin position="1"/>
        <end position="163"/>
    </location>
</feature>
<feature type="domain" description="S1-like">
    <location>
        <begin position="18"/>
        <end position="96"/>
    </location>
</feature>
<feature type="region of interest" description="Disordered" evidence="1">
    <location>
        <begin position="106"/>
        <end position="163"/>
    </location>
</feature>
<feature type="compositionally biased region" description="Acidic residues" evidence="1">
    <location>
        <begin position="126"/>
        <end position="136"/>
    </location>
</feature>
<feature type="compositionally biased region" description="Acidic residues" evidence="1">
    <location>
        <begin position="146"/>
        <end position="163"/>
    </location>
</feature>
<proteinExistence type="inferred from homology"/>
<accession>Q29MZ0</accession>
<gene>
    <name type="ORF">GA16587</name>
</gene>
<comment type="similarity">
    <text evidence="2">Belongs to the EIF1AD family.</text>
</comment>
<protein>
    <recommendedName>
        <fullName>Probable RNA-binding protein EIF1AD</fullName>
    </recommendedName>
    <alternativeName>
        <fullName>Eukaryotic translation initiation factor 1A domain-containing protein</fullName>
    </alternativeName>
</protein>
<sequence length="163" mass="19007">MHRSHPSTTRRKHLIKEMMEDDYELPTEQQQIVRVVRSCGNNLHEVETATPESENFLVSMPNKYRKNMWVKRGDFLLVEPIEEGDKVKAEISKILTNDHVKEYTKAGIWPERFAKNPPQEAKAQNDDEDSDFEDDLTPNTNRPVQESDEEDEDTDTESSDEED</sequence>